<organism>
    <name type="scientific">Danio rerio</name>
    <name type="common">Zebrafish</name>
    <name type="synonym">Brachydanio rerio</name>
    <dbReference type="NCBI Taxonomy" id="7955"/>
    <lineage>
        <taxon>Eukaryota</taxon>
        <taxon>Metazoa</taxon>
        <taxon>Chordata</taxon>
        <taxon>Craniata</taxon>
        <taxon>Vertebrata</taxon>
        <taxon>Euteleostomi</taxon>
        <taxon>Actinopterygii</taxon>
        <taxon>Neopterygii</taxon>
        <taxon>Teleostei</taxon>
        <taxon>Ostariophysi</taxon>
        <taxon>Cypriniformes</taxon>
        <taxon>Danionidae</taxon>
        <taxon>Danioninae</taxon>
        <taxon>Danio</taxon>
    </lineage>
</organism>
<dbReference type="EC" id="6.1.1.11" evidence="4"/>
<dbReference type="EMBL" id="AB453157">
    <property type="protein sequence ID" value="BAI44434.1"/>
    <property type="molecule type" value="mRNA"/>
</dbReference>
<dbReference type="EMBL" id="AY648839">
    <property type="protein sequence ID" value="AAT68157.1"/>
    <property type="molecule type" value="mRNA"/>
</dbReference>
<dbReference type="EMBL" id="AL954678">
    <property type="status" value="NOT_ANNOTATED_CDS"/>
    <property type="molecule type" value="Genomic_DNA"/>
</dbReference>
<dbReference type="EMBL" id="BC081608">
    <property type="protein sequence ID" value="AAH81608.1"/>
    <property type="molecule type" value="mRNA"/>
</dbReference>
<dbReference type="RefSeq" id="NP_001003882.1">
    <property type="nucleotide sequence ID" value="NM_001003882.2"/>
</dbReference>
<dbReference type="SMR" id="Q6DRC0"/>
<dbReference type="FunCoup" id="Q6DRC0">
    <property type="interactions" value="2368"/>
</dbReference>
<dbReference type="STRING" id="7955.ENSDARP00000015775"/>
<dbReference type="PaxDb" id="7955-ENSDARP00000015775"/>
<dbReference type="Ensembl" id="ENSDART00000003296">
    <property type="protein sequence ID" value="ENSDARP00000015775"/>
    <property type="gene ID" value="ENSDARG00000008237"/>
</dbReference>
<dbReference type="GeneID" id="445405"/>
<dbReference type="KEGG" id="dre:445405"/>
<dbReference type="AGR" id="ZFIN:ZDB-GENE-040831-1"/>
<dbReference type="CTD" id="6301"/>
<dbReference type="ZFIN" id="ZDB-GENE-040831-1">
    <property type="gene designation" value="sars1"/>
</dbReference>
<dbReference type="eggNOG" id="KOG2509">
    <property type="taxonomic scope" value="Eukaryota"/>
</dbReference>
<dbReference type="HOGENOM" id="CLU_023797_0_0_1"/>
<dbReference type="InParanoid" id="Q6DRC0"/>
<dbReference type="OMA" id="GYTPCFR"/>
<dbReference type="OrthoDB" id="10264585at2759"/>
<dbReference type="PhylomeDB" id="Q6DRC0"/>
<dbReference type="TreeFam" id="TF300762"/>
<dbReference type="BRENDA" id="6.1.1.11">
    <property type="organism ID" value="928"/>
</dbReference>
<dbReference type="PRO" id="PR:Q6DRC0"/>
<dbReference type="Proteomes" id="UP000000437">
    <property type="component" value="Chromosome 23"/>
</dbReference>
<dbReference type="Bgee" id="ENSDARG00000008237">
    <property type="expression patterns" value="Expressed in tail and 35 other cell types or tissues"/>
</dbReference>
<dbReference type="GO" id="GO:0005829">
    <property type="term" value="C:cytosol"/>
    <property type="evidence" value="ECO:0000250"/>
    <property type="project" value="UniProtKB"/>
</dbReference>
<dbReference type="GO" id="GO:0005634">
    <property type="term" value="C:nucleus"/>
    <property type="evidence" value="ECO:0000315"/>
    <property type="project" value="ZFIN"/>
</dbReference>
<dbReference type="GO" id="GO:0005524">
    <property type="term" value="F:ATP binding"/>
    <property type="evidence" value="ECO:0007669"/>
    <property type="project" value="UniProtKB-KW"/>
</dbReference>
<dbReference type="GO" id="GO:0000978">
    <property type="term" value="F:RNA polymerase II cis-regulatory region sequence-specific DNA binding"/>
    <property type="evidence" value="ECO:0000250"/>
    <property type="project" value="UniProtKB"/>
</dbReference>
<dbReference type="GO" id="GO:0004828">
    <property type="term" value="F:serine-tRNA ligase activity"/>
    <property type="evidence" value="ECO:0000314"/>
    <property type="project" value="UniProtKB"/>
</dbReference>
<dbReference type="GO" id="GO:0000049">
    <property type="term" value="F:tRNA binding"/>
    <property type="evidence" value="ECO:0000318"/>
    <property type="project" value="GO_Central"/>
</dbReference>
<dbReference type="GO" id="GO:0001525">
    <property type="term" value="P:angiogenesis"/>
    <property type="evidence" value="ECO:0000315"/>
    <property type="project" value="ZFIN"/>
</dbReference>
<dbReference type="GO" id="GO:0001569">
    <property type="term" value="P:branching involved in blood vessel morphogenesis"/>
    <property type="evidence" value="ECO:0000315"/>
    <property type="project" value="ZFIN"/>
</dbReference>
<dbReference type="GO" id="GO:0061300">
    <property type="term" value="P:cerebellum vasculature development"/>
    <property type="evidence" value="ECO:0000315"/>
    <property type="project" value="ZFIN"/>
</dbReference>
<dbReference type="GO" id="GO:0002181">
    <property type="term" value="P:cytoplasmic translation"/>
    <property type="evidence" value="ECO:0000250"/>
    <property type="project" value="UniProtKB"/>
</dbReference>
<dbReference type="GO" id="GO:0016525">
    <property type="term" value="P:negative regulation of angiogenesis"/>
    <property type="evidence" value="ECO:0000315"/>
    <property type="project" value="UniProtKB"/>
</dbReference>
<dbReference type="GO" id="GO:1903671">
    <property type="term" value="P:negative regulation of sprouting angiogenesis"/>
    <property type="evidence" value="ECO:0000315"/>
    <property type="project" value="UniProtKB"/>
</dbReference>
<dbReference type="GO" id="GO:0000122">
    <property type="term" value="P:negative regulation of transcription by RNA polymerase II"/>
    <property type="evidence" value="ECO:0000250"/>
    <property type="project" value="UniProtKB"/>
</dbReference>
<dbReference type="GO" id="GO:1904046">
    <property type="term" value="P:negative regulation of vascular endothelial growth factor production"/>
    <property type="evidence" value="ECO:0000314"/>
    <property type="project" value="UniProtKB"/>
</dbReference>
<dbReference type="GO" id="GO:0045765">
    <property type="term" value="P:regulation of angiogenesis"/>
    <property type="evidence" value="ECO:0000315"/>
    <property type="project" value="ZFIN"/>
</dbReference>
<dbReference type="GO" id="GO:1901342">
    <property type="term" value="P:regulation of vasculature development"/>
    <property type="evidence" value="ECO:0000316"/>
    <property type="project" value="ZFIN"/>
</dbReference>
<dbReference type="GO" id="GO:0006434">
    <property type="term" value="P:seryl-tRNA aminoacylation"/>
    <property type="evidence" value="ECO:0000314"/>
    <property type="project" value="UniProtKB"/>
</dbReference>
<dbReference type="GO" id="GO:0001944">
    <property type="term" value="P:vasculature development"/>
    <property type="evidence" value="ECO:0000315"/>
    <property type="project" value="ZFIN"/>
</dbReference>
<dbReference type="CDD" id="cd00770">
    <property type="entry name" value="SerRS_core"/>
    <property type="match status" value="1"/>
</dbReference>
<dbReference type="FunFam" id="1.10.287.40:FF:000002">
    <property type="entry name" value="Serine--tRNA ligase, cytoplasmic"/>
    <property type="match status" value="1"/>
</dbReference>
<dbReference type="FunFam" id="3.30.930.10:FF:000027">
    <property type="entry name" value="Serine--tRNA ligase, cytoplasmic"/>
    <property type="match status" value="1"/>
</dbReference>
<dbReference type="Gene3D" id="3.30.930.10">
    <property type="entry name" value="Bira Bifunctional Protein, Domain 2"/>
    <property type="match status" value="1"/>
</dbReference>
<dbReference type="Gene3D" id="1.10.287.40">
    <property type="entry name" value="Serine-tRNA synthetase, tRNA binding domain"/>
    <property type="match status" value="1"/>
</dbReference>
<dbReference type="InterPro" id="IPR002314">
    <property type="entry name" value="aa-tRNA-synt_IIb"/>
</dbReference>
<dbReference type="InterPro" id="IPR006195">
    <property type="entry name" value="aa-tRNA-synth_II"/>
</dbReference>
<dbReference type="InterPro" id="IPR045864">
    <property type="entry name" value="aa-tRNA-synth_II/BPL/LPL"/>
</dbReference>
<dbReference type="InterPro" id="IPR002317">
    <property type="entry name" value="Ser-tRNA-ligase_type_1"/>
</dbReference>
<dbReference type="InterPro" id="IPR015866">
    <property type="entry name" value="Ser-tRNA-synth_1_N"/>
</dbReference>
<dbReference type="InterPro" id="IPR042103">
    <property type="entry name" value="SerRS_1_N_sf"/>
</dbReference>
<dbReference type="InterPro" id="IPR033729">
    <property type="entry name" value="SerRS_core"/>
</dbReference>
<dbReference type="InterPro" id="IPR010978">
    <property type="entry name" value="tRNA-bd_arm"/>
</dbReference>
<dbReference type="NCBIfam" id="TIGR00414">
    <property type="entry name" value="serS"/>
    <property type="match status" value="1"/>
</dbReference>
<dbReference type="PANTHER" id="PTHR11778">
    <property type="entry name" value="SERYL-TRNA SYNTHETASE"/>
    <property type="match status" value="1"/>
</dbReference>
<dbReference type="Pfam" id="PF02403">
    <property type="entry name" value="Seryl_tRNA_N"/>
    <property type="match status" value="1"/>
</dbReference>
<dbReference type="Pfam" id="PF00587">
    <property type="entry name" value="tRNA-synt_2b"/>
    <property type="match status" value="1"/>
</dbReference>
<dbReference type="PIRSF" id="PIRSF001529">
    <property type="entry name" value="Ser-tRNA-synth_IIa"/>
    <property type="match status" value="1"/>
</dbReference>
<dbReference type="PRINTS" id="PR00981">
    <property type="entry name" value="TRNASYNTHSER"/>
</dbReference>
<dbReference type="SUPFAM" id="SSF55681">
    <property type="entry name" value="Class II aaRS and biotin synthetases"/>
    <property type="match status" value="1"/>
</dbReference>
<dbReference type="SUPFAM" id="SSF46589">
    <property type="entry name" value="tRNA-binding arm"/>
    <property type="match status" value="1"/>
</dbReference>
<dbReference type="PROSITE" id="PS50862">
    <property type="entry name" value="AA_TRNA_LIGASE_II"/>
    <property type="match status" value="1"/>
</dbReference>
<feature type="chain" id="PRO_0000441403" description="Serine--tRNA ligase, cytoplasmic">
    <location>
        <begin position="1"/>
        <end position="515"/>
    </location>
</feature>
<feature type="region of interest" description="Interaction with tRNA" evidence="1">
    <location>
        <begin position="9"/>
        <end position="61"/>
    </location>
</feature>
<feature type="region of interest" description="Disordered" evidence="2">
    <location>
        <begin position="475"/>
        <end position="515"/>
    </location>
</feature>
<feature type="short sequence motif" description="Nuclear localization signal" evidence="1">
    <location>
        <begin position="482"/>
        <end position="494"/>
    </location>
</feature>
<feature type="compositionally biased region" description="Basic and acidic residues" evidence="2">
    <location>
        <begin position="479"/>
        <end position="507"/>
    </location>
</feature>
<feature type="binding site" evidence="1">
    <location>
        <position position="271"/>
    </location>
    <ligand>
        <name>L-serine</name>
        <dbReference type="ChEBI" id="CHEBI:33384"/>
    </ligand>
</feature>
<feature type="binding site" evidence="1">
    <location>
        <begin position="302"/>
        <end position="304"/>
    </location>
    <ligand>
        <name>ATP</name>
        <dbReference type="ChEBI" id="CHEBI:30616"/>
    </ligand>
</feature>
<feature type="binding site" evidence="1">
    <location>
        <position position="302"/>
    </location>
    <ligand>
        <name>L-serine</name>
        <dbReference type="ChEBI" id="CHEBI:33384"/>
    </ligand>
</feature>
<feature type="binding site" evidence="1">
    <location>
        <begin position="318"/>
        <end position="321"/>
    </location>
    <ligand>
        <name>ATP</name>
        <dbReference type="ChEBI" id="CHEBI:30616"/>
    </ligand>
</feature>
<feature type="binding site" evidence="1">
    <location>
        <position position="325"/>
    </location>
    <ligand>
        <name>L-serine</name>
        <dbReference type="ChEBI" id="CHEBI:33384"/>
    </ligand>
</feature>
<feature type="binding site" evidence="1">
    <location>
        <begin position="391"/>
        <end position="394"/>
    </location>
    <ligand>
        <name>ATP</name>
        <dbReference type="ChEBI" id="CHEBI:30616"/>
    </ligand>
</feature>
<feature type="binding site" evidence="1">
    <location>
        <position position="427"/>
    </location>
    <ligand>
        <name>L-serine</name>
        <dbReference type="ChEBI" id="CHEBI:33384"/>
    </ligand>
</feature>
<feature type="site" description="Important for serine binding" evidence="1">
    <location>
        <position position="429"/>
    </location>
</feature>
<feature type="mutagenesis site" description="In sars-s277; pronounced dilatation of the aortic arch vasculature at 72 hpf and subsequent aberrant branching of the hindbrain capillary network." evidence="3">
    <original>F</original>
    <variation>V</variation>
    <location>
        <position position="383"/>
    </location>
</feature>
<feature type="mutagenesis site" description="Abolishes tRNA ligase activity. No effect on ability to regulate sprouting angiogenesis." evidence="4">
    <original>T</original>
    <variation>A</variation>
    <location>
        <position position="429"/>
    </location>
</feature>
<gene>
    <name type="primary">sars1</name>
    <name evidence="9" type="synonym">sars</name>
</gene>
<comment type="function">
    <text evidence="3 4 5 6">Catalyzes the attachment of serine to tRNA(Ser) in a two-step reaction: serine is first activated by ATP to form Ser-AMP and then transferred to the acceptor end of tRNA(Ser) (PubMed:19423848). Is probably also able to aminoacylate tRNA(Sec) with serine, to form the misacylated tRNA L-seryl-tRNA(Sec), which will be further converted into selenocysteinyl-tRNA(Sec) (PubMed:19423848). In the nucleus, binds to the vegfa core promoter and prevents myc binding and transcriptional activation by myc (PubMed:24940000). Thereby inhibits the production of vegfa and sprouting angiogenesis mediated by vegfa (PubMed:19423847, PubMed:19423848, PubMed:22353712, PubMed:24940000).</text>
</comment>
<comment type="catalytic activity">
    <reaction evidence="4">
        <text>tRNA(Ser) + L-serine + ATP = L-seryl-tRNA(Ser) + AMP + diphosphate + H(+)</text>
        <dbReference type="Rhea" id="RHEA:12292"/>
        <dbReference type="Rhea" id="RHEA-COMP:9669"/>
        <dbReference type="Rhea" id="RHEA-COMP:9703"/>
        <dbReference type="ChEBI" id="CHEBI:15378"/>
        <dbReference type="ChEBI" id="CHEBI:30616"/>
        <dbReference type="ChEBI" id="CHEBI:33019"/>
        <dbReference type="ChEBI" id="CHEBI:33384"/>
        <dbReference type="ChEBI" id="CHEBI:78442"/>
        <dbReference type="ChEBI" id="CHEBI:78533"/>
        <dbReference type="ChEBI" id="CHEBI:456215"/>
        <dbReference type="EC" id="6.1.1.11"/>
    </reaction>
</comment>
<comment type="catalytic activity">
    <reaction evidence="4">
        <text>tRNA(Sec) + L-serine + ATP = L-seryl-tRNA(Sec) + AMP + diphosphate + H(+)</text>
        <dbReference type="Rhea" id="RHEA:42580"/>
        <dbReference type="Rhea" id="RHEA-COMP:9742"/>
        <dbReference type="Rhea" id="RHEA-COMP:10128"/>
        <dbReference type="ChEBI" id="CHEBI:15378"/>
        <dbReference type="ChEBI" id="CHEBI:30616"/>
        <dbReference type="ChEBI" id="CHEBI:33019"/>
        <dbReference type="ChEBI" id="CHEBI:33384"/>
        <dbReference type="ChEBI" id="CHEBI:78442"/>
        <dbReference type="ChEBI" id="CHEBI:78533"/>
        <dbReference type="ChEBI" id="CHEBI:456215"/>
        <dbReference type="EC" id="6.1.1.11"/>
    </reaction>
</comment>
<comment type="subcellular location">
    <subcellularLocation>
        <location evidence="1">Cytoplasm</location>
    </subcellularLocation>
    <subcellularLocation>
        <location evidence="1">Nucleus</location>
    </subcellularLocation>
    <text evidence="1">Predominantly cytoplasmic, but a minor proportion is also found in the nucleus.</text>
</comment>
<comment type="domain">
    <text evidence="1">Consists of two distinct domains, a catalytic core and a N-terminal extension that is involved in tRNA binding.</text>
</comment>
<comment type="disruption phenotype">
    <text evidence="4 5 6">Morpholino knockdown causes aberrant angiogenesis with excessive intersegmental vessel branching, due to excessive expression of vegfa.</text>
</comment>
<comment type="similarity">
    <text evidence="7">Belongs to the class-II aminoacyl-tRNA synthetase family. Type-1 seryl-tRNA synthetase subfamily.</text>
</comment>
<reference evidence="8" key="1">
    <citation type="journal article" date="2009" name="Circ. Res.">
        <title>Noncanonical activity of seryl-tRNA synthetase is involved in vascular development.</title>
        <authorList>
            <person name="Fukui H."/>
            <person name="Hanaoka R."/>
            <person name="Kawahara A."/>
        </authorList>
    </citation>
    <scope>NUCLEOTIDE SEQUENCE [MRNA]</scope>
    <scope>FUNCTION</scope>
    <scope>CATALYTIC ACTIVITY</scope>
    <scope>DISRUPTION PHENOTYPE</scope>
    <scope>MUTAGENESIS OF THR-429</scope>
</reference>
<reference key="2">
    <citation type="journal article" date="2004" name="Proc. Natl. Acad. Sci. U.S.A.">
        <title>Identification of 315 genes essential for early zebrafish development.</title>
        <authorList>
            <person name="Amsterdam A."/>
            <person name="Nissen R.M."/>
            <person name="Sun Z."/>
            <person name="Swindell E.C."/>
            <person name="Farrington S."/>
            <person name="Hopkins N."/>
        </authorList>
    </citation>
    <scope>NUCLEOTIDE SEQUENCE [LARGE SCALE MRNA]</scope>
    <source>
        <tissue>Embryo</tissue>
    </source>
</reference>
<reference key="3">
    <citation type="journal article" date="2013" name="Nature">
        <title>The zebrafish reference genome sequence and its relationship to the human genome.</title>
        <authorList>
            <person name="Howe K."/>
            <person name="Clark M.D."/>
            <person name="Torroja C.F."/>
            <person name="Torrance J."/>
            <person name="Berthelot C."/>
            <person name="Muffato M."/>
            <person name="Collins J.E."/>
            <person name="Humphray S."/>
            <person name="McLaren K."/>
            <person name="Matthews L."/>
            <person name="McLaren S."/>
            <person name="Sealy I."/>
            <person name="Caccamo M."/>
            <person name="Churcher C."/>
            <person name="Scott C."/>
            <person name="Barrett J.C."/>
            <person name="Koch R."/>
            <person name="Rauch G.J."/>
            <person name="White S."/>
            <person name="Chow W."/>
            <person name="Kilian B."/>
            <person name="Quintais L.T."/>
            <person name="Guerra-Assuncao J.A."/>
            <person name="Zhou Y."/>
            <person name="Gu Y."/>
            <person name="Yen J."/>
            <person name="Vogel J.H."/>
            <person name="Eyre T."/>
            <person name="Redmond S."/>
            <person name="Banerjee R."/>
            <person name="Chi J."/>
            <person name="Fu B."/>
            <person name="Langley E."/>
            <person name="Maguire S.F."/>
            <person name="Laird G.K."/>
            <person name="Lloyd D."/>
            <person name="Kenyon E."/>
            <person name="Donaldson S."/>
            <person name="Sehra H."/>
            <person name="Almeida-King J."/>
            <person name="Loveland J."/>
            <person name="Trevanion S."/>
            <person name="Jones M."/>
            <person name="Quail M."/>
            <person name="Willey D."/>
            <person name="Hunt A."/>
            <person name="Burton J."/>
            <person name="Sims S."/>
            <person name="McLay K."/>
            <person name="Plumb B."/>
            <person name="Davis J."/>
            <person name="Clee C."/>
            <person name="Oliver K."/>
            <person name="Clark R."/>
            <person name="Riddle C."/>
            <person name="Elliot D."/>
            <person name="Threadgold G."/>
            <person name="Harden G."/>
            <person name="Ware D."/>
            <person name="Begum S."/>
            <person name="Mortimore B."/>
            <person name="Kerry G."/>
            <person name="Heath P."/>
            <person name="Phillimore B."/>
            <person name="Tracey A."/>
            <person name="Corby N."/>
            <person name="Dunn M."/>
            <person name="Johnson C."/>
            <person name="Wood J."/>
            <person name="Clark S."/>
            <person name="Pelan S."/>
            <person name="Griffiths G."/>
            <person name="Smith M."/>
            <person name="Glithero R."/>
            <person name="Howden P."/>
            <person name="Barker N."/>
            <person name="Lloyd C."/>
            <person name="Stevens C."/>
            <person name="Harley J."/>
            <person name="Holt K."/>
            <person name="Panagiotidis G."/>
            <person name="Lovell J."/>
            <person name="Beasley H."/>
            <person name="Henderson C."/>
            <person name="Gordon D."/>
            <person name="Auger K."/>
            <person name="Wright D."/>
            <person name="Collins J."/>
            <person name="Raisen C."/>
            <person name="Dyer L."/>
            <person name="Leung K."/>
            <person name="Robertson L."/>
            <person name="Ambridge K."/>
            <person name="Leongamornlert D."/>
            <person name="McGuire S."/>
            <person name="Gilderthorp R."/>
            <person name="Griffiths C."/>
            <person name="Manthravadi D."/>
            <person name="Nichol S."/>
            <person name="Barker G."/>
            <person name="Whitehead S."/>
            <person name="Kay M."/>
            <person name="Brown J."/>
            <person name="Murnane C."/>
            <person name="Gray E."/>
            <person name="Humphries M."/>
            <person name="Sycamore N."/>
            <person name="Barker D."/>
            <person name="Saunders D."/>
            <person name="Wallis J."/>
            <person name="Babbage A."/>
            <person name="Hammond S."/>
            <person name="Mashreghi-Mohammadi M."/>
            <person name="Barr L."/>
            <person name="Martin S."/>
            <person name="Wray P."/>
            <person name="Ellington A."/>
            <person name="Matthews N."/>
            <person name="Ellwood M."/>
            <person name="Woodmansey R."/>
            <person name="Clark G."/>
            <person name="Cooper J."/>
            <person name="Tromans A."/>
            <person name="Grafham D."/>
            <person name="Skuce C."/>
            <person name="Pandian R."/>
            <person name="Andrews R."/>
            <person name="Harrison E."/>
            <person name="Kimberley A."/>
            <person name="Garnett J."/>
            <person name="Fosker N."/>
            <person name="Hall R."/>
            <person name="Garner P."/>
            <person name="Kelly D."/>
            <person name="Bird C."/>
            <person name="Palmer S."/>
            <person name="Gehring I."/>
            <person name="Berger A."/>
            <person name="Dooley C.M."/>
            <person name="Ersan-Urun Z."/>
            <person name="Eser C."/>
            <person name="Geiger H."/>
            <person name="Geisler M."/>
            <person name="Karotki L."/>
            <person name="Kirn A."/>
            <person name="Konantz J."/>
            <person name="Konantz M."/>
            <person name="Oberlander M."/>
            <person name="Rudolph-Geiger S."/>
            <person name="Teucke M."/>
            <person name="Lanz C."/>
            <person name="Raddatz G."/>
            <person name="Osoegawa K."/>
            <person name="Zhu B."/>
            <person name="Rapp A."/>
            <person name="Widaa S."/>
            <person name="Langford C."/>
            <person name="Yang F."/>
            <person name="Schuster S.C."/>
            <person name="Carter N.P."/>
            <person name="Harrow J."/>
            <person name="Ning Z."/>
            <person name="Herrero J."/>
            <person name="Searle S.M."/>
            <person name="Enright A."/>
            <person name="Geisler R."/>
            <person name="Plasterk R.H."/>
            <person name="Lee C."/>
            <person name="Westerfield M."/>
            <person name="de Jong P.J."/>
            <person name="Zon L.I."/>
            <person name="Postlethwait J.H."/>
            <person name="Nusslein-Volhard C."/>
            <person name="Hubbard T.J."/>
            <person name="Roest Crollius H."/>
            <person name="Rogers J."/>
            <person name="Stemple D.L."/>
        </authorList>
    </citation>
    <scope>NUCLEOTIDE SEQUENCE [LARGE SCALE GENOMIC DNA]</scope>
    <source>
        <strain>Tuebingen</strain>
    </source>
</reference>
<reference key="4">
    <citation type="submission" date="2004-09" db="EMBL/GenBank/DDBJ databases">
        <authorList>
            <consortium name="NIH - Zebrafish Gene Collection (ZGC) project"/>
        </authorList>
    </citation>
    <scope>NUCLEOTIDE SEQUENCE [LARGE SCALE MRNA]</scope>
</reference>
<reference key="5">
    <citation type="journal article" date="2009" name="Circ. Res.">
        <title>Genetic evidence for a noncanonical function of seryl-tRNA synthetase in vascular development.</title>
        <authorList>
            <person name="Herzog W."/>
            <person name="Mueller K."/>
            <person name="Huisken J."/>
            <person name="Stainier D.Y."/>
        </authorList>
    </citation>
    <scope>FUNCTION</scope>
    <scope>MUTAGENESIS OF PHE-383</scope>
</reference>
<reference key="6">
    <citation type="journal article" date="2012" name="Nat. Commun.">
        <title>Unique domain appended to vertebrate tRNA synthetase is essential for vascular development.</title>
        <authorList>
            <person name="Xu X."/>
            <person name="Shi Y."/>
            <person name="Zhang H.M."/>
            <person name="Swindell E.C."/>
            <person name="Marshall A.G."/>
            <person name="Guo M."/>
            <person name="Kishi S."/>
            <person name="Yang X.L."/>
        </authorList>
    </citation>
    <scope>FUNCTION</scope>
    <scope>DISRUPTION PHENOTYPE</scope>
</reference>
<reference key="7">
    <citation type="journal article" date="2014" name="Elife">
        <title>tRNA synthetase counteracts c-Myc to develop functional vasculature.</title>
        <authorList>
            <person name="Shi Y."/>
            <person name="Xu X."/>
            <person name="Zhang Q."/>
            <person name="Fu G."/>
            <person name="Mo Z."/>
            <person name="Wang G.S."/>
            <person name="Kishi S."/>
            <person name="Yang X.L."/>
        </authorList>
    </citation>
    <scope>FUNCTION</scope>
    <scope>DISRUPTION PHENOTYPE</scope>
</reference>
<protein>
    <recommendedName>
        <fullName>Serine--tRNA ligase, cytoplasmic</fullName>
        <ecNumber evidence="4">6.1.1.11</ecNumber>
    </recommendedName>
    <alternativeName>
        <fullName>Seryl-tRNA synthetase</fullName>
        <shortName>SerRS</shortName>
    </alternativeName>
</protein>
<accession>Q6DRC0</accession>
<name>SYSC_DANRE</name>
<evidence type="ECO:0000250" key="1">
    <source>
        <dbReference type="UniProtKB" id="P49591"/>
    </source>
</evidence>
<evidence type="ECO:0000256" key="2">
    <source>
        <dbReference type="SAM" id="MobiDB-lite"/>
    </source>
</evidence>
<evidence type="ECO:0000269" key="3">
    <source>
    </source>
</evidence>
<evidence type="ECO:0000269" key="4">
    <source>
    </source>
</evidence>
<evidence type="ECO:0000269" key="5">
    <source>
    </source>
</evidence>
<evidence type="ECO:0000269" key="6">
    <source>
    </source>
</evidence>
<evidence type="ECO:0000305" key="7"/>
<evidence type="ECO:0000312" key="8">
    <source>
        <dbReference type="EMBL" id="BAI44434.1"/>
    </source>
</evidence>
<evidence type="ECO:0000312" key="9">
    <source>
        <dbReference type="ZFIN" id="ZDB-GENE-040831-1"/>
    </source>
</evidence>
<sequence>MVLDLDLFRTDKGGDPEIIRETQRKRFKDVSLVDKLVQADTEWRKCRFTADNLNKAKNLCSKSIGEKMKKKEPVGDDDTLPEEAQNLEALTAETLSPLTVTQIKKVRVLVDEAVQKTDSDRLKLEAERFEYLREIGNLLHPSVPISNDEDADNKVERTWGDCTVQKKYSHVDLVVMVDGYEGEKGAIVAGSRGYFLKGPLVFLEQALINYALRILYSKNYNLLYTPFFMRKEVMQEVAQLSQFDEELYKVIGKGSEKSDDNTVDEKYLIATSEQPIAAFLRDEWLKPEELPIRYAGLSTCFRQEVGSHGRDTRGIFRVHQFEKIEQFVYASPHDGKSWEMFDEMIGTAESFYQTLGIPYRIVNIVSGALNHAASKKLDLEAWFPGSQAFRELVSCSNCTDYQARRLRIRYGQTKKMMDKAEFVHMLNATMCATTRVICAILENFQTEEGIIVPEPLKAFMPPGLTEIIKFVKPAPIDQETTKKQKKQQEGGKKKKHQGGDADLENKVENMSVNDS</sequence>
<keyword id="KW-0030">Aminoacyl-tRNA synthetase</keyword>
<keyword id="KW-0067">ATP-binding</keyword>
<keyword id="KW-0963">Cytoplasm</keyword>
<keyword id="KW-0238">DNA-binding</keyword>
<keyword id="KW-0436">Ligase</keyword>
<keyword id="KW-0547">Nucleotide-binding</keyword>
<keyword id="KW-0539">Nucleus</keyword>
<keyword id="KW-0648">Protein biosynthesis</keyword>
<keyword id="KW-1185">Reference proteome</keyword>
<proteinExistence type="evidence at protein level"/>